<dbReference type="EMBL" id="CP001392">
    <property type="protein sequence ID" value="ACM34002.1"/>
    <property type="molecule type" value="Genomic_DNA"/>
</dbReference>
<dbReference type="RefSeq" id="WP_011806335.1">
    <property type="nucleotide sequence ID" value="NC_011992.1"/>
</dbReference>
<dbReference type="SMR" id="B9MDJ3"/>
<dbReference type="GeneID" id="84680682"/>
<dbReference type="KEGG" id="dia:Dtpsy_2567"/>
<dbReference type="eggNOG" id="COG0238">
    <property type="taxonomic scope" value="Bacteria"/>
</dbReference>
<dbReference type="HOGENOM" id="CLU_148710_0_3_4"/>
<dbReference type="Proteomes" id="UP000000450">
    <property type="component" value="Chromosome"/>
</dbReference>
<dbReference type="GO" id="GO:0022627">
    <property type="term" value="C:cytosolic small ribosomal subunit"/>
    <property type="evidence" value="ECO:0007669"/>
    <property type="project" value="TreeGrafter"/>
</dbReference>
<dbReference type="GO" id="GO:0070181">
    <property type="term" value="F:small ribosomal subunit rRNA binding"/>
    <property type="evidence" value="ECO:0007669"/>
    <property type="project" value="TreeGrafter"/>
</dbReference>
<dbReference type="GO" id="GO:0003735">
    <property type="term" value="F:structural constituent of ribosome"/>
    <property type="evidence" value="ECO:0007669"/>
    <property type="project" value="InterPro"/>
</dbReference>
<dbReference type="GO" id="GO:0006412">
    <property type="term" value="P:translation"/>
    <property type="evidence" value="ECO:0007669"/>
    <property type="project" value="UniProtKB-UniRule"/>
</dbReference>
<dbReference type="Gene3D" id="4.10.640.10">
    <property type="entry name" value="Ribosomal protein S18"/>
    <property type="match status" value="1"/>
</dbReference>
<dbReference type="HAMAP" id="MF_00270">
    <property type="entry name" value="Ribosomal_bS18"/>
    <property type="match status" value="1"/>
</dbReference>
<dbReference type="InterPro" id="IPR001648">
    <property type="entry name" value="Ribosomal_bS18"/>
</dbReference>
<dbReference type="InterPro" id="IPR036870">
    <property type="entry name" value="Ribosomal_bS18_sf"/>
</dbReference>
<dbReference type="NCBIfam" id="TIGR00165">
    <property type="entry name" value="S18"/>
    <property type="match status" value="1"/>
</dbReference>
<dbReference type="PANTHER" id="PTHR13479">
    <property type="entry name" value="30S RIBOSOMAL PROTEIN S18"/>
    <property type="match status" value="1"/>
</dbReference>
<dbReference type="PANTHER" id="PTHR13479:SF40">
    <property type="entry name" value="SMALL RIBOSOMAL SUBUNIT PROTEIN BS18M"/>
    <property type="match status" value="1"/>
</dbReference>
<dbReference type="Pfam" id="PF01084">
    <property type="entry name" value="Ribosomal_S18"/>
    <property type="match status" value="1"/>
</dbReference>
<dbReference type="PRINTS" id="PR00974">
    <property type="entry name" value="RIBOSOMALS18"/>
</dbReference>
<dbReference type="SUPFAM" id="SSF46911">
    <property type="entry name" value="Ribosomal protein S18"/>
    <property type="match status" value="1"/>
</dbReference>
<protein>
    <recommendedName>
        <fullName evidence="1">Small ribosomal subunit protein bS18</fullName>
    </recommendedName>
    <alternativeName>
        <fullName evidence="2">30S ribosomal protein S18</fullName>
    </alternativeName>
</protein>
<name>RS18_ACIET</name>
<feature type="chain" id="PRO_1000125797" description="Small ribosomal subunit protein bS18">
    <location>
        <begin position="1"/>
        <end position="93"/>
    </location>
</feature>
<proteinExistence type="inferred from homology"/>
<evidence type="ECO:0000255" key="1">
    <source>
        <dbReference type="HAMAP-Rule" id="MF_00270"/>
    </source>
</evidence>
<evidence type="ECO:0000305" key="2"/>
<reference key="1">
    <citation type="submission" date="2009-01" db="EMBL/GenBank/DDBJ databases">
        <title>Complete sequence of Diaphorobacter sp. TPSY.</title>
        <authorList>
            <consortium name="US DOE Joint Genome Institute"/>
            <person name="Lucas S."/>
            <person name="Copeland A."/>
            <person name="Lapidus A."/>
            <person name="Glavina del Rio T."/>
            <person name="Tice H."/>
            <person name="Bruce D."/>
            <person name="Goodwin L."/>
            <person name="Pitluck S."/>
            <person name="Chertkov O."/>
            <person name="Brettin T."/>
            <person name="Detter J.C."/>
            <person name="Han C."/>
            <person name="Larimer F."/>
            <person name="Land M."/>
            <person name="Hauser L."/>
            <person name="Kyrpides N."/>
            <person name="Mikhailova N."/>
            <person name="Coates J.D."/>
        </authorList>
    </citation>
    <scope>NUCLEOTIDE SEQUENCE [LARGE SCALE GENOMIC DNA]</scope>
    <source>
        <strain>TPSY</strain>
    </source>
</reference>
<comment type="function">
    <text evidence="1">Binds as a heterodimer with protein bS6 to the central domain of the 16S rRNA, where it helps stabilize the platform of the 30S subunit.</text>
</comment>
<comment type="subunit">
    <text evidence="1">Part of the 30S ribosomal subunit. Forms a tight heterodimer with protein bS6.</text>
</comment>
<comment type="similarity">
    <text evidence="1">Belongs to the bacterial ribosomal protein bS18 family.</text>
</comment>
<accession>B9MDJ3</accession>
<gene>
    <name evidence="1" type="primary">rpsR</name>
    <name type="ordered locus">Dtpsy_2567</name>
</gene>
<organism>
    <name type="scientific">Acidovorax ebreus (strain TPSY)</name>
    <name type="common">Diaphorobacter sp. (strain TPSY)</name>
    <dbReference type="NCBI Taxonomy" id="535289"/>
    <lineage>
        <taxon>Bacteria</taxon>
        <taxon>Pseudomonadati</taxon>
        <taxon>Pseudomonadota</taxon>
        <taxon>Betaproteobacteria</taxon>
        <taxon>Burkholderiales</taxon>
        <taxon>Comamonadaceae</taxon>
        <taxon>Diaphorobacter</taxon>
    </lineage>
</organism>
<keyword id="KW-1185">Reference proteome</keyword>
<keyword id="KW-0687">Ribonucleoprotein</keyword>
<keyword id="KW-0689">Ribosomal protein</keyword>
<keyword id="KW-0694">RNA-binding</keyword>
<keyword id="KW-0699">rRNA-binding</keyword>
<sequence length="93" mass="10992">MATFKKFNKDKRPKRNTQSLLFKRKRFCRFTVAGVEEIDYKDVDTLRDFIAENGKIIPARLTGTRAIYQRQLNTAIKRARFLALLPYSDQHKI</sequence>